<protein>
    <recommendedName>
        <fullName>Probable mannan endo-1,4-beta-mannosidase F</fullName>
        <ecNumber>3.2.1.78</ecNumber>
    </recommendedName>
    <alternativeName>
        <fullName>Endo-beta-1,4-mannanase F</fullName>
    </alternativeName>
</protein>
<organism>
    <name type="scientific">Aspergillus flavus (strain ATCC 200026 / FGSC A1120 / IAM 13836 / NRRL 3357 / JCM 12722 / SRRC 167)</name>
    <dbReference type="NCBI Taxonomy" id="332952"/>
    <lineage>
        <taxon>Eukaryota</taxon>
        <taxon>Fungi</taxon>
        <taxon>Dikarya</taxon>
        <taxon>Ascomycota</taxon>
        <taxon>Pezizomycotina</taxon>
        <taxon>Eurotiomycetes</taxon>
        <taxon>Eurotiomycetidae</taxon>
        <taxon>Eurotiales</taxon>
        <taxon>Aspergillaceae</taxon>
        <taxon>Aspergillus</taxon>
        <taxon>Aspergillus subgen. Circumdati</taxon>
    </lineage>
</organism>
<gene>
    <name type="primary">manF</name>
    <name type="ORF">AFLA_069870</name>
</gene>
<proteinExistence type="inferred from homology"/>
<keyword id="KW-0119">Carbohydrate metabolism</keyword>
<keyword id="KW-0325">Glycoprotein</keyword>
<keyword id="KW-0326">Glycosidase</keyword>
<keyword id="KW-0378">Hydrolase</keyword>
<keyword id="KW-0964">Secreted</keyword>
<keyword id="KW-0732">Signal</keyword>
<sequence length="463" mass="49994">MRSLSSIALLSVVGAASAQAGPWAQCGGKSFSGSSECASGWKCQELNEWFSQCVPGAESTTPTVSSTPTPTDAPSVSITASATTGINKSISVSSASKSTPLPSSSSASPSPRPTGSGSFAKADGLQFSIDGETKYFAGTNAYWLPFQMNDADIDSVFDHLEQAGLKILRVWGFNDVNTAPSPGTVYFQLHDKEKSTSTINTGKDGLQRLDYVVAAAEKHGVKLIIPFVNSWDDYGGYNAYVKAYGGSKTEWFTNEKIQSVYQAYIKAVVSRYRDSPAIFAWELGNEPRCSGCSTDVIHGWATKISAYIKSLDPNHMVALGDEGMGLTIGSDQSYPYGTSEGNDFEKNLAIPDIDFGTLHLYTTDWGIKDNAWGNGWVENHAKACKAAGKPCLFEEYGMKGNHCTDELKWQKTSLSSGTAADLIWQYGQQLSTGESPKDAYSIFYGTDEWKCAVMDHMENVNKN</sequence>
<accession>B8NIV9</accession>
<dbReference type="EC" id="3.2.1.78"/>
<dbReference type="EMBL" id="EQ963479">
    <property type="protein sequence ID" value="EED50165.1"/>
    <property type="molecule type" value="Genomic_DNA"/>
</dbReference>
<dbReference type="RefSeq" id="XP_002380546.1">
    <property type="nucleotide sequence ID" value="XM_002380505.1"/>
</dbReference>
<dbReference type="SMR" id="B8NIV9"/>
<dbReference type="STRING" id="332952.B8NIV9"/>
<dbReference type="GlyCosmos" id="B8NIV9">
    <property type="glycosylation" value="1 site, No reported glycans"/>
</dbReference>
<dbReference type="EnsemblFungi" id="EED50165">
    <property type="protein sequence ID" value="EED50165"/>
    <property type="gene ID" value="AFLA_069870"/>
</dbReference>
<dbReference type="VEuPathDB" id="FungiDB:AFLA_008923"/>
<dbReference type="eggNOG" id="ENOG502S75I">
    <property type="taxonomic scope" value="Eukaryota"/>
</dbReference>
<dbReference type="HOGENOM" id="CLU_031603_4_1_1"/>
<dbReference type="OMA" id="YFQLHDK"/>
<dbReference type="GO" id="GO:0005576">
    <property type="term" value="C:extracellular region"/>
    <property type="evidence" value="ECO:0007669"/>
    <property type="project" value="UniProtKB-SubCell"/>
</dbReference>
<dbReference type="GO" id="GO:0030248">
    <property type="term" value="F:cellulose binding"/>
    <property type="evidence" value="ECO:0007669"/>
    <property type="project" value="InterPro"/>
</dbReference>
<dbReference type="GO" id="GO:0016985">
    <property type="term" value="F:mannan endo-1,4-beta-mannosidase activity"/>
    <property type="evidence" value="ECO:0007669"/>
    <property type="project" value="UniProtKB-EC"/>
</dbReference>
<dbReference type="GO" id="GO:0046355">
    <property type="term" value="P:mannan catabolic process"/>
    <property type="evidence" value="ECO:0007669"/>
    <property type="project" value="UniProtKB-ARBA"/>
</dbReference>
<dbReference type="FunFam" id="3.20.20.80:FF:000076">
    <property type="entry name" value="Mannan endo-1,4-beta-mannosidase A"/>
    <property type="match status" value="1"/>
</dbReference>
<dbReference type="Gene3D" id="3.20.20.80">
    <property type="entry name" value="Glycosidases"/>
    <property type="match status" value="1"/>
</dbReference>
<dbReference type="InterPro" id="IPR035971">
    <property type="entry name" value="CBD_sf"/>
</dbReference>
<dbReference type="InterPro" id="IPR000254">
    <property type="entry name" value="Cellulose-bd_dom_fun"/>
</dbReference>
<dbReference type="InterPro" id="IPR001547">
    <property type="entry name" value="Glyco_hydro_5"/>
</dbReference>
<dbReference type="InterPro" id="IPR017853">
    <property type="entry name" value="Glycoside_hydrolase_SF"/>
</dbReference>
<dbReference type="InterPro" id="IPR045053">
    <property type="entry name" value="MAN-like"/>
</dbReference>
<dbReference type="PANTHER" id="PTHR31451">
    <property type="match status" value="1"/>
</dbReference>
<dbReference type="PANTHER" id="PTHR31451:SF57">
    <property type="entry name" value="BETA-1,4-ENDOGLUCANASE (EUROFUNG)-RELATED"/>
    <property type="match status" value="1"/>
</dbReference>
<dbReference type="Pfam" id="PF00734">
    <property type="entry name" value="CBM_1"/>
    <property type="match status" value="1"/>
</dbReference>
<dbReference type="Pfam" id="PF00150">
    <property type="entry name" value="Cellulase"/>
    <property type="match status" value="1"/>
</dbReference>
<dbReference type="SMART" id="SM00236">
    <property type="entry name" value="fCBD"/>
    <property type="match status" value="1"/>
</dbReference>
<dbReference type="SUPFAM" id="SSF51445">
    <property type="entry name" value="(Trans)glycosidases"/>
    <property type="match status" value="1"/>
</dbReference>
<dbReference type="SUPFAM" id="SSF57180">
    <property type="entry name" value="Cellulose-binding domain"/>
    <property type="match status" value="1"/>
</dbReference>
<dbReference type="PROSITE" id="PS00562">
    <property type="entry name" value="CBM1_1"/>
    <property type="match status" value="1"/>
</dbReference>
<dbReference type="PROSITE" id="PS51164">
    <property type="entry name" value="CBM1_2"/>
    <property type="match status" value="1"/>
</dbReference>
<feature type="signal peptide" evidence="4">
    <location>
        <begin position="1"/>
        <end position="18"/>
    </location>
</feature>
<feature type="chain" id="PRO_0000393714" description="Probable mannan endo-1,4-beta-mannosidase F">
    <location>
        <begin position="19"/>
        <end position="463"/>
    </location>
</feature>
<feature type="domain" description="CBM1" evidence="5">
    <location>
        <begin position="19"/>
        <end position="54"/>
    </location>
</feature>
<feature type="region of interest" description="Disordered" evidence="6">
    <location>
        <begin position="57"/>
        <end position="78"/>
    </location>
</feature>
<feature type="region of interest" description="Ser-rich linker">
    <location>
        <begin position="75"/>
        <end position="118"/>
    </location>
</feature>
<feature type="region of interest" description="Disordered" evidence="6">
    <location>
        <begin position="93"/>
        <end position="121"/>
    </location>
</feature>
<feature type="region of interest" description="Catalytic">
    <location>
        <begin position="119"/>
        <end position="463"/>
    </location>
</feature>
<feature type="compositionally biased region" description="Low complexity" evidence="6">
    <location>
        <begin position="59"/>
        <end position="77"/>
    </location>
</feature>
<feature type="compositionally biased region" description="Low complexity" evidence="6">
    <location>
        <begin position="93"/>
        <end position="118"/>
    </location>
</feature>
<feature type="active site" description="Proton donor" evidence="3">
    <location>
        <position position="286"/>
    </location>
</feature>
<feature type="active site" description="Nucleophile" evidence="3">
    <location>
        <position position="395"/>
    </location>
</feature>
<feature type="binding site" evidence="2">
    <location>
        <position position="171"/>
    </location>
    <ligand>
        <name>substrate</name>
    </ligand>
</feature>
<feature type="binding site" evidence="2">
    <location>
        <position position="285"/>
    </location>
    <ligand>
        <name>substrate</name>
    </ligand>
</feature>
<feature type="binding site" evidence="2">
    <location>
        <position position="361"/>
    </location>
    <ligand>
        <name>substrate</name>
    </ligand>
</feature>
<feature type="binding site" evidence="2">
    <location>
        <position position="424"/>
    </location>
    <ligand>
        <name>substrate</name>
    </ligand>
</feature>
<feature type="glycosylation site" description="N-linked (GlcNAc...) asparagine" evidence="4">
    <location>
        <position position="87"/>
    </location>
</feature>
<name>MANF_ASPFN</name>
<comment type="function">
    <text evidence="1">Endo-1,4-mannanase, a crucial enzyme for depolymerization of seed galactomannans and wood galactoglucomannans.</text>
</comment>
<comment type="catalytic activity">
    <reaction>
        <text>Random hydrolysis of (1-&gt;4)-beta-D-mannosidic linkages in mannans, galactomannans and glucomannans.</text>
        <dbReference type="EC" id="3.2.1.78"/>
    </reaction>
</comment>
<comment type="subcellular location">
    <subcellularLocation>
        <location evidence="1">Secreted</location>
    </subcellularLocation>
</comment>
<comment type="domain">
    <text>Has a modular structure: a carbohydrate-binding module (CBM) at the N-terminus, a linker rich in serines, and a C-terminal endo-1,4-mannanase catalytic module. The genes for catalytic modules and CBMs seem to have evolved separately and have been linked by gene fusion.</text>
</comment>
<comment type="similarity">
    <text evidence="7">Belongs to the glycosyl hydrolase 5 (cellulase A) family.</text>
</comment>
<reference key="1">
    <citation type="journal article" date="2015" name="Genome Announc.">
        <title>Genome sequence of Aspergillus flavus NRRL 3357, a strain that causes aflatoxin contamination of food and feed.</title>
        <authorList>
            <person name="Nierman W.C."/>
            <person name="Yu J."/>
            <person name="Fedorova-Abrams N.D."/>
            <person name="Losada L."/>
            <person name="Cleveland T.E."/>
            <person name="Bhatnagar D."/>
            <person name="Bennett J.W."/>
            <person name="Dean R."/>
            <person name="Payne G.A."/>
        </authorList>
    </citation>
    <scope>NUCLEOTIDE SEQUENCE [LARGE SCALE GENOMIC DNA]</scope>
    <source>
        <strain>ATCC 200026 / FGSC A1120 / IAM 13836 / NRRL 3357 / JCM 12722 / SRRC 167</strain>
    </source>
</reference>
<evidence type="ECO:0000250" key="1"/>
<evidence type="ECO:0000250" key="2">
    <source>
        <dbReference type="UniProtKB" id="B4XC07"/>
    </source>
</evidence>
<evidence type="ECO:0000250" key="3">
    <source>
        <dbReference type="UniProtKB" id="Q99036"/>
    </source>
</evidence>
<evidence type="ECO:0000255" key="4"/>
<evidence type="ECO:0000255" key="5">
    <source>
        <dbReference type="PROSITE-ProRule" id="PRU00597"/>
    </source>
</evidence>
<evidence type="ECO:0000256" key="6">
    <source>
        <dbReference type="SAM" id="MobiDB-lite"/>
    </source>
</evidence>
<evidence type="ECO:0000305" key="7"/>